<feature type="chain" id="PRO_0000392493" description="Transposase InsH for insertion sequence element IS5-15">
    <location>
        <begin position="1"/>
        <end position="326"/>
    </location>
</feature>
<comment type="function">
    <text>Involved in the transposition of the insertion sequence IS5.</text>
</comment>
<comment type="similarity">
    <text evidence="1">Belongs to the transposase 11 family.</text>
</comment>
<comment type="caution">
    <text evidence="1">There is no equivalent of this gene in strain K12 / MG1655.</text>
</comment>
<comment type="sequence caution" evidence="1">
    <conflict type="erroneous initiation">
        <sequence resource="EMBL-CDS" id="CAA04874"/>
    </conflict>
    <text>Truncated N-terminus.</text>
</comment>
<protein>
    <recommendedName>
        <fullName>Transposase InsH for insertion sequence element IS5-15</fullName>
    </recommendedName>
</protein>
<organism>
    <name type="scientific">Escherichia coli (strain K12)</name>
    <dbReference type="NCBI Taxonomy" id="83333"/>
    <lineage>
        <taxon>Bacteria</taxon>
        <taxon>Pseudomonadati</taxon>
        <taxon>Pseudomonadota</taxon>
        <taxon>Gammaproteobacteria</taxon>
        <taxon>Enterobacterales</taxon>
        <taxon>Enterobacteriaceae</taxon>
        <taxon>Escherichia</taxon>
    </lineage>
</organism>
<proteinExistence type="inferred from homology"/>
<sequence>MSHQLTFADSEFSSKRRQTRKEIFLSRMEQILPWQNMVEVIEPFYPKAGNGRRPYPLETMLRIHCMQHWYNLSDGAMEDALYEIASMRLFARLSLDSALPDRTTIMNFRHLLEQHQLARQLFKTINRWLAEAGVMMTQGTLVDATIIEAPSSTKNKEQQRDPEMHQTKKGNQWHFGMKAHIGVDAKSGLTHSLVTTAANEHDLNQLGNLLHGEEQFVSADAGYQGAPQREELAEVDVDWLIAERPGKVRTLKQHPRKNKTAINIEYMKASIRARVEHPFRIIKRQFGFVKARYKGLLKNDNQLAMLFTLANLFRADQMIRQWERSH</sequence>
<dbReference type="EMBL" id="AJ001620">
    <property type="protein sequence ID" value="CAA04874.1"/>
    <property type="status" value="ALT_INIT"/>
    <property type="molecule type" value="Genomic_DNA"/>
</dbReference>
<dbReference type="EMBL" id="AP009048">
    <property type="protein sequence ID" value="BAE77163.1"/>
    <property type="molecule type" value="Genomic_DNA"/>
</dbReference>
<dbReference type="RefSeq" id="WP_000019403.1">
    <property type="nucleotide sequence ID" value="NZ_SSZK01000120.1"/>
</dbReference>
<dbReference type="KEGG" id="ecj:JW5928"/>
<dbReference type="KEGG" id="ecoc:C3026_01250"/>
<dbReference type="KEGG" id="ecoc:C3026_02730"/>
<dbReference type="KEGG" id="ecoc:C3026_03280"/>
<dbReference type="KEGG" id="ecoc:C3026_07795"/>
<dbReference type="KEGG" id="ecoc:C3026_10760"/>
<dbReference type="KEGG" id="ecoc:C3026_11440"/>
<dbReference type="KEGG" id="ecoc:C3026_12250"/>
<dbReference type="KEGG" id="ecoc:C3026_16315"/>
<dbReference type="KEGG" id="ecoc:C3026_17505"/>
<dbReference type="KEGG" id="ecoc:C3026_18985"/>
<dbReference type="KEGG" id="ecoc:C3026_23975"/>
<dbReference type="HOGENOM" id="CLU_049873_1_2_6"/>
<dbReference type="PhylomeDB" id="P0CE62"/>
<dbReference type="PRO" id="PR:P0CE62"/>
<dbReference type="GO" id="GO:0003677">
    <property type="term" value="F:DNA binding"/>
    <property type="evidence" value="ECO:0007669"/>
    <property type="project" value="UniProtKB-KW"/>
</dbReference>
<dbReference type="GO" id="GO:0004803">
    <property type="term" value="F:transposase activity"/>
    <property type="evidence" value="ECO:0007669"/>
    <property type="project" value="InterPro"/>
</dbReference>
<dbReference type="GO" id="GO:0006313">
    <property type="term" value="P:DNA transposition"/>
    <property type="evidence" value="ECO:0007669"/>
    <property type="project" value="InterPro"/>
</dbReference>
<dbReference type="InterPro" id="IPR047959">
    <property type="entry name" value="Transpos_IS5"/>
</dbReference>
<dbReference type="InterPro" id="IPR002559">
    <property type="entry name" value="Transposase_11"/>
</dbReference>
<dbReference type="InterPro" id="IPR008490">
    <property type="entry name" value="Transposase_InsH_N"/>
</dbReference>
<dbReference type="NCBIfam" id="NF033581">
    <property type="entry name" value="transpos_IS5_4"/>
    <property type="match status" value="1"/>
</dbReference>
<dbReference type="PANTHER" id="PTHR35604">
    <property type="entry name" value="TRANSPOSASE INSH FOR INSERTION SEQUENCE ELEMENT IS5A-RELATED"/>
    <property type="match status" value="1"/>
</dbReference>
<dbReference type="PANTHER" id="PTHR35604:SF2">
    <property type="entry name" value="TRANSPOSASE INSH FOR INSERTION SEQUENCE ELEMENT IS5A-RELATED"/>
    <property type="match status" value="1"/>
</dbReference>
<dbReference type="Pfam" id="PF01609">
    <property type="entry name" value="DDE_Tnp_1"/>
    <property type="match status" value="1"/>
</dbReference>
<dbReference type="Pfam" id="PF05598">
    <property type="entry name" value="DUF772"/>
    <property type="match status" value="1"/>
</dbReference>
<gene>
    <name type="ordered locus">JW5928</name>
</gene>
<name>INH15_ECOLI</name>
<keyword id="KW-0233">DNA recombination</keyword>
<keyword id="KW-0238">DNA-binding</keyword>
<keyword id="KW-0814">Transposable element</keyword>
<keyword id="KW-0815">Transposition</keyword>
<evidence type="ECO:0000305" key="1"/>
<accession>P0CE62</accession>
<accession>O07987</accession>
<accession>O07988</accession>
<accession>P03837</accession>
<accession>P76355</accession>
<accession>Q2MBK1</accession>
<accession>Q2MBM8</accession>
<reference key="1">
    <citation type="submission" date="1997-11" db="EMBL/GenBank/DDBJ databases">
        <authorList>
            <person name="Hesslinger C."/>
            <person name="Fairhurst S.A."/>
            <person name="Sawers G."/>
        </authorList>
    </citation>
    <scope>NUCLEOTIDE SEQUENCE [GENOMIC DNA]</scope>
    <source>
        <strain>K12 / W3110 / ATCC 27325 / DSM 5911</strain>
    </source>
</reference>
<reference key="2">
    <citation type="journal article" date="1996" name="DNA Res.">
        <title>A 570-kb DNA sequence of the Escherichia coli K-12 genome corresponding to the 28.0-40.1 min region on the linkage map.</title>
        <authorList>
            <person name="Aiba H."/>
            <person name="Baba T."/>
            <person name="Fujita K."/>
            <person name="Hayashi K."/>
            <person name="Inada T."/>
            <person name="Isono K."/>
            <person name="Itoh T."/>
            <person name="Kasai H."/>
            <person name="Kashimoto K."/>
            <person name="Kimura S."/>
            <person name="Kitakawa M."/>
            <person name="Kitagawa M."/>
            <person name="Makino K."/>
            <person name="Miki T."/>
            <person name="Mizobuchi K."/>
            <person name="Mori H."/>
            <person name="Mori T."/>
            <person name="Motomura K."/>
            <person name="Nakade S."/>
            <person name="Nakamura Y."/>
            <person name="Nashimoto H."/>
            <person name="Nishio Y."/>
            <person name="Oshima T."/>
            <person name="Saito N."/>
            <person name="Sampei G."/>
            <person name="Seki Y."/>
            <person name="Sivasundaram S."/>
            <person name="Tagami H."/>
            <person name="Takeda J."/>
            <person name="Takemoto K."/>
            <person name="Takeuchi Y."/>
            <person name="Wada C."/>
            <person name="Yamamoto Y."/>
            <person name="Horiuchi T."/>
        </authorList>
    </citation>
    <scope>NUCLEOTIDE SEQUENCE [LARGE SCALE GENOMIC DNA]</scope>
    <source>
        <strain>K12 / W3110 / ATCC 27325 / DSM 5911</strain>
    </source>
</reference>
<reference key="3">
    <citation type="journal article" date="1996" name="DNA Res.">
        <title>A 460-kb DNA sequence of the Escherichia coli K-12 genome corresponding to the 40.1-50.0 min region on the linkage map.</title>
        <authorList>
            <person name="Itoh T."/>
            <person name="Aiba H."/>
            <person name="Baba T."/>
            <person name="Fujita K."/>
            <person name="Hayashi K."/>
            <person name="Inada T."/>
            <person name="Isono K."/>
            <person name="Kasai H."/>
            <person name="Kimura S."/>
            <person name="Kitakawa M."/>
            <person name="Kitagawa M."/>
            <person name="Makino K."/>
            <person name="Miki T."/>
            <person name="Mizobuchi K."/>
            <person name="Mori H."/>
            <person name="Mori T."/>
            <person name="Motomura K."/>
            <person name="Nakade S."/>
            <person name="Nakamura Y."/>
            <person name="Nashimoto H."/>
            <person name="Nishio Y."/>
            <person name="Oshima T."/>
            <person name="Saito N."/>
            <person name="Sampei G."/>
            <person name="Seki Y."/>
            <person name="Sivasundaram S."/>
            <person name="Tagami H."/>
            <person name="Takeda J."/>
            <person name="Takemoto K."/>
            <person name="Wada C."/>
            <person name="Yamamoto Y."/>
            <person name="Horiuchi T."/>
        </authorList>
    </citation>
    <scope>NUCLEOTIDE SEQUENCE [LARGE SCALE GENOMIC DNA]</scope>
    <source>
        <strain>K12 / W3110 / ATCC 27325 / DSM 5911</strain>
    </source>
</reference>
<reference key="4">
    <citation type="journal article" date="2006" name="Mol. Syst. Biol.">
        <title>Highly accurate genome sequences of Escherichia coli K-12 strains MG1655 and W3110.</title>
        <authorList>
            <person name="Hayashi K."/>
            <person name="Morooka N."/>
            <person name="Yamamoto Y."/>
            <person name="Fujita K."/>
            <person name="Isono K."/>
            <person name="Choi S."/>
            <person name="Ohtsubo E."/>
            <person name="Baba T."/>
            <person name="Wanner B.L."/>
            <person name="Mori H."/>
            <person name="Horiuchi T."/>
        </authorList>
    </citation>
    <scope>NUCLEOTIDE SEQUENCE [LARGE SCALE GENOMIC DNA]</scope>
    <source>
        <strain>K12 / W3110 / ATCC 27325 / DSM 5911</strain>
    </source>
</reference>